<name>SSB_BACTN</name>
<protein>
    <recommendedName>
        <fullName evidence="1">Single-stranded DNA-binding protein</fullName>
        <shortName evidence="1">SSB</shortName>
    </recommendedName>
</protein>
<gene>
    <name type="primary">ssb</name>
    <name type="ordered locus">BT_1497</name>
</gene>
<evidence type="ECO:0000255" key="1">
    <source>
        <dbReference type="HAMAP-Rule" id="MF_00984"/>
    </source>
</evidence>
<evidence type="ECO:0000256" key="2">
    <source>
        <dbReference type="SAM" id="MobiDB-lite"/>
    </source>
</evidence>
<comment type="subunit">
    <text evidence="1">Homotetramer.</text>
</comment>
<keyword id="KW-0238">DNA-binding</keyword>
<keyword id="KW-1185">Reference proteome</keyword>
<feature type="chain" id="PRO_0000096006" description="Single-stranded DNA-binding protein">
    <location>
        <begin position="1"/>
        <end position="161"/>
    </location>
</feature>
<feature type="domain" description="SSB" evidence="1">
    <location>
        <begin position="3"/>
        <end position="109"/>
    </location>
</feature>
<feature type="region of interest" description="Disordered" evidence="2">
    <location>
        <begin position="109"/>
        <end position="161"/>
    </location>
</feature>
<feature type="compositionally biased region" description="Low complexity" evidence="2">
    <location>
        <begin position="119"/>
        <end position="152"/>
    </location>
</feature>
<organism>
    <name type="scientific">Bacteroides thetaiotaomicron (strain ATCC 29148 / DSM 2079 / JCM 5827 / CCUG 10774 / NCTC 10582 / VPI-5482 / E50)</name>
    <dbReference type="NCBI Taxonomy" id="226186"/>
    <lineage>
        <taxon>Bacteria</taxon>
        <taxon>Pseudomonadati</taxon>
        <taxon>Bacteroidota</taxon>
        <taxon>Bacteroidia</taxon>
        <taxon>Bacteroidales</taxon>
        <taxon>Bacteroidaceae</taxon>
        <taxon>Bacteroides</taxon>
    </lineage>
</organism>
<dbReference type="EMBL" id="AE015928">
    <property type="protein sequence ID" value="AAO76604.1"/>
    <property type="molecule type" value="Genomic_DNA"/>
</dbReference>
<dbReference type="RefSeq" id="NP_810410.1">
    <property type="nucleotide sequence ID" value="NC_004663.1"/>
</dbReference>
<dbReference type="RefSeq" id="WP_011107825.1">
    <property type="nucleotide sequence ID" value="NC_004663.1"/>
</dbReference>
<dbReference type="SMR" id="Q8A7M7"/>
<dbReference type="FunCoup" id="Q8A7M7">
    <property type="interactions" value="392"/>
</dbReference>
<dbReference type="STRING" id="226186.BT_1497"/>
<dbReference type="PaxDb" id="226186-BT_1497"/>
<dbReference type="EnsemblBacteria" id="AAO76604">
    <property type="protein sequence ID" value="AAO76604"/>
    <property type="gene ID" value="BT_1497"/>
</dbReference>
<dbReference type="GeneID" id="60927480"/>
<dbReference type="KEGG" id="bth:BT_1497"/>
<dbReference type="PATRIC" id="fig|226186.12.peg.1532"/>
<dbReference type="eggNOG" id="COG0629">
    <property type="taxonomic scope" value="Bacteria"/>
</dbReference>
<dbReference type="HOGENOM" id="CLU_078758_0_2_10"/>
<dbReference type="InParanoid" id="Q8A7M7"/>
<dbReference type="OrthoDB" id="9809878at2"/>
<dbReference type="Proteomes" id="UP000001414">
    <property type="component" value="Chromosome"/>
</dbReference>
<dbReference type="GO" id="GO:0009295">
    <property type="term" value="C:nucleoid"/>
    <property type="evidence" value="ECO:0000318"/>
    <property type="project" value="GO_Central"/>
</dbReference>
<dbReference type="GO" id="GO:0008047">
    <property type="term" value="F:enzyme activator activity"/>
    <property type="evidence" value="ECO:0000318"/>
    <property type="project" value="GO_Central"/>
</dbReference>
<dbReference type="GO" id="GO:0003697">
    <property type="term" value="F:single-stranded DNA binding"/>
    <property type="evidence" value="ECO:0000318"/>
    <property type="project" value="GO_Central"/>
</dbReference>
<dbReference type="GO" id="GO:0006260">
    <property type="term" value="P:DNA replication"/>
    <property type="evidence" value="ECO:0000318"/>
    <property type="project" value="GO_Central"/>
</dbReference>
<dbReference type="CDD" id="cd04496">
    <property type="entry name" value="SSB_OBF"/>
    <property type="match status" value="1"/>
</dbReference>
<dbReference type="Gene3D" id="2.40.50.140">
    <property type="entry name" value="Nucleic acid-binding proteins"/>
    <property type="match status" value="1"/>
</dbReference>
<dbReference type="HAMAP" id="MF_00984">
    <property type="entry name" value="SSB"/>
    <property type="match status" value="1"/>
</dbReference>
<dbReference type="InterPro" id="IPR012340">
    <property type="entry name" value="NA-bd_OB-fold"/>
</dbReference>
<dbReference type="InterPro" id="IPR000424">
    <property type="entry name" value="Primosome_PriB/ssb"/>
</dbReference>
<dbReference type="InterPro" id="IPR011344">
    <property type="entry name" value="ssDNA-bd"/>
</dbReference>
<dbReference type="NCBIfam" id="TIGR00621">
    <property type="entry name" value="ssb"/>
    <property type="match status" value="1"/>
</dbReference>
<dbReference type="PANTHER" id="PTHR10302">
    <property type="entry name" value="SINGLE-STRANDED DNA-BINDING PROTEIN"/>
    <property type="match status" value="1"/>
</dbReference>
<dbReference type="PANTHER" id="PTHR10302:SF27">
    <property type="entry name" value="SINGLE-STRANDED DNA-BINDING PROTEIN"/>
    <property type="match status" value="1"/>
</dbReference>
<dbReference type="Pfam" id="PF00436">
    <property type="entry name" value="SSB"/>
    <property type="match status" value="1"/>
</dbReference>
<dbReference type="PIRSF" id="PIRSF002070">
    <property type="entry name" value="SSB"/>
    <property type="match status" value="1"/>
</dbReference>
<dbReference type="SUPFAM" id="SSF50249">
    <property type="entry name" value="Nucleic acid-binding proteins"/>
    <property type="match status" value="1"/>
</dbReference>
<dbReference type="PROSITE" id="PS50935">
    <property type="entry name" value="SSB"/>
    <property type="match status" value="1"/>
</dbReference>
<accession>Q8A7M7</accession>
<sequence>MSVNKVILIGNVGQDPRVKYFDTGSAVATFPLATTDRGYTLANGTQIPERTEWHNIVASNRLAEIVDKYVHKGDKLYLEGKIRTRSYSDQSGAMRYITEIFVDNMEMLSPKGANTGAGAPQPSATQAQQPQQMQQPQQPQQQAQPSQAQPIQDNPADDLPF</sequence>
<proteinExistence type="inferred from homology"/>
<reference key="1">
    <citation type="journal article" date="2003" name="Science">
        <title>A genomic view of the human-Bacteroides thetaiotaomicron symbiosis.</title>
        <authorList>
            <person name="Xu J."/>
            <person name="Bjursell M.K."/>
            <person name="Himrod J."/>
            <person name="Deng S."/>
            <person name="Carmichael L.K."/>
            <person name="Chiang H.C."/>
            <person name="Hooper L.V."/>
            <person name="Gordon J.I."/>
        </authorList>
    </citation>
    <scope>NUCLEOTIDE SEQUENCE [LARGE SCALE GENOMIC DNA]</scope>
    <source>
        <strain>ATCC 29148 / DSM 2079 / JCM 5827 / CCUG 10774 / NCTC 10582 / VPI-5482 / E50</strain>
    </source>
</reference>